<reference key="1">
    <citation type="journal article" date="2002" name="DNA Res.">
        <title>Complete genome structure of the thermophilic cyanobacterium Thermosynechococcus elongatus BP-1.</title>
        <authorList>
            <person name="Nakamura Y."/>
            <person name="Kaneko T."/>
            <person name="Sato S."/>
            <person name="Ikeuchi M."/>
            <person name="Katoh H."/>
            <person name="Sasamoto S."/>
            <person name="Watanabe A."/>
            <person name="Iriguchi M."/>
            <person name="Kawashima K."/>
            <person name="Kimura T."/>
            <person name="Kishida Y."/>
            <person name="Kiyokawa C."/>
            <person name="Kohara M."/>
            <person name="Matsumoto M."/>
            <person name="Matsuno A."/>
            <person name="Nakazaki N."/>
            <person name="Shimpo S."/>
            <person name="Sugimoto M."/>
            <person name="Takeuchi C."/>
            <person name="Yamada M."/>
            <person name="Tabata S."/>
        </authorList>
    </citation>
    <scope>NUCLEOTIDE SEQUENCE [LARGE SCALE GENOMIC DNA]</scope>
    <source>
        <strain>NIES-2133 / IAM M-273 / BP-1</strain>
    </source>
</reference>
<keyword id="KW-0143">Chaperone</keyword>
<keyword id="KW-0963">Cytoplasm</keyword>
<keyword id="KW-0996">Nickel insertion</keyword>
<keyword id="KW-1185">Reference proteome</keyword>
<dbReference type="EMBL" id="BA000039">
    <property type="protein sequence ID" value="BAC08088.1"/>
    <property type="molecule type" value="Genomic_DNA"/>
</dbReference>
<dbReference type="RefSeq" id="NP_681326.1">
    <property type="nucleotide sequence ID" value="NC_004113.1"/>
</dbReference>
<dbReference type="RefSeq" id="WP_011056386.1">
    <property type="nucleotide sequence ID" value="NC_004113.1"/>
</dbReference>
<dbReference type="SMR" id="Q8DLF7"/>
<dbReference type="STRING" id="197221.gene:10747126"/>
<dbReference type="EnsemblBacteria" id="BAC08088">
    <property type="protein sequence ID" value="BAC08088"/>
    <property type="gene ID" value="BAC08088"/>
</dbReference>
<dbReference type="KEGG" id="tel:tlr0536"/>
<dbReference type="PATRIC" id="fig|197221.4.peg.565"/>
<dbReference type="eggNOG" id="COG0829">
    <property type="taxonomic scope" value="Bacteria"/>
</dbReference>
<dbReference type="Proteomes" id="UP000000440">
    <property type="component" value="Chromosome"/>
</dbReference>
<dbReference type="GO" id="GO:0005737">
    <property type="term" value="C:cytoplasm"/>
    <property type="evidence" value="ECO:0007669"/>
    <property type="project" value="UniProtKB-SubCell"/>
</dbReference>
<dbReference type="GO" id="GO:0016151">
    <property type="term" value="F:nickel cation binding"/>
    <property type="evidence" value="ECO:0007669"/>
    <property type="project" value="UniProtKB-UniRule"/>
</dbReference>
<dbReference type="HAMAP" id="MF_01384">
    <property type="entry name" value="UreD"/>
    <property type="match status" value="1"/>
</dbReference>
<dbReference type="InterPro" id="IPR002669">
    <property type="entry name" value="UreD"/>
</dbReference>
<dbReference type="PANTHER" id="PTHR33643">
    <property type="entry name" value="UREASE ACCESSORY PROTEIN D"/>
    <property type="match status" value="1"/>
</dbReference>
<dbReference type="PANTHER" id="PTHR33643:SF1">
    <property type="entry name" value="UREASE ACCESSORY PROTEIN D"/>
    <property type="match status" value="1"/>
</dbReference>
<dbReference type="Pfam" id="PF01774">
    <property type="entry name" value="UreD"/>
    <property type="match status" value="1"/>
</dbReference>
<protein>
    <recommendedName>
        <fullName evidence="1">Urease accessory protein UreD</fullName>
    </recommendedName>
</protein>
<evidence type="ECO:0000255" key="1">
    <source>
        <dbReference type="HAMAP-Rule" id="MF_01384"/>
    </source>
</evidence>
<name>URED_THEVB</name>
<gene>
    <name evidence="1" type="primary">ureD</name>
    <name type="ordered locus">tlr0536</name>
</gene>
<proteinExistence type="inferred from homology"/>
<organism>
    <name type="scientific">Thermosynechococcus vestitus (strain NIES-2133 / IAM M-273 / BP-1)</name>
    <dbReference type="NCBI Taxonomy" id="197221"/>
    <lineage>
        <taxon>Bacteria</taxon>
        <taxon>Bacillati</taxon>
        <taxon>Cyanobacteriota</taxon>
        <taxon>Cyanophyceae</taxon>
        <taxon>Acaryochloridales</taxon>
        <taxon>Thermosynechococcaceae</taxon>
        <taxon>Thermosynechococcus</taxon>
    </lineage>
</organism>
<accession>Q8DLF7</accession>
<comment type="function">
    <text evidence="1">Required for maturation of urease via the functional incorporation of the urease nickel metallocenter.</text>
</comment>
<comment type="subunit">
    <text evidence="1">UreD, UreF and UreG form a complex that acts as a GTP-hydrolysis-dependent molecular chaperone, activating the urease apoprotein by helping to assemble the nickel containing metallocenter of UreC. The UreE protein probably delivers the nickel.</text>
</comment>
<comment type="subcellular location">
    <subcellularLocation>
        <location evidence="1">Cytoplasm</location>
    </subcellularLocation>
</comment>
<comment type="similarity">
    <text evidence="1">Belongs to the UreD family.</text>
</comment>
<feature type="chain" id="PRO_0000340522" description="Urease accessory protein UreD">
    <location>
        <begin position="1"/>
        <end position="274"/>
    </location>
</feature>
<sequence length="274" mass="31180">MAGWLGELELVYAWRRGQTIPVRAYASAPLKLQRSFYPEGKPICHSVILHTAGGYVGGDRLHQKITLEPQCRVLLTTPAATKVYGRAQIPVEQTLHCHVADEAVLEWLPQETIIFAGAQFHQRLRIDLAPQAQVGLWEMTRFGRTARGEVFNRGYWRYHTEVWQGGVPLWIDRQRIEGTKMMLTAMNALQGCPLMGTLAWVGREVSSEQIQRLRDLAMGIQGEMGVSTLIRGVVCRYRGHSMAELRRWFVAAWQLLRPGQGSHPLVCYPRVWPR</sequence>